<proteinExistence type="inferred from homology"/>
<sequence>MIKVVFMGTPDFTVPVLRRLIEDGYEVVGVVTQPDRPVGRKKVLTPTPVKVEAEKHGIPVLQPLKIREKDEYEKVLALEPDLIVTAAFGQIVPNEILEAPKYGCINVHASLLPELRGGAPIHYAIMEGKEKTGITIMYMVEKLDAGDILTQVEVEIEERETTGSLFDKLSEAGAHLLSKTVPLLIQGKLEPIKQNEEEVTFAYNIKREQEKIDWTKTGEEVYNHIRGLNPWPVAYTTLAGQVVKVWWGEKVPITEPAEAGTIVAIEEDGFVVATSNETGVKITELQPSGKKRMSCSQFLRGTKPEIGTKLGENA</sequence>
<accession>Q819U1</accession>
<protein>
    <recommendedName>
        <fullName evidence="1">Methionyl-tRNA formyltransferase</fullName>
        <ecNumber evidence="1">2.1.2.9</ecNumber>
    </recommendedName>
</protein>
<feature type="chain" id="PRO_0000082911" description="Methionyl-tRNA formyltransferase">
    <location>
        <begin position="1"/>
        <end position="314"/>
    </location>
</feature>
<feature type="binding site" evidence="1">
    <location>
        <begin position="110"/>
        <end position="113"/>
    </location>
    <ligand>
        <name>(6S)-5,6,7,8-tetrahydrofolate</name>
        <dbReference type="ChEBI" id="CHEBI:57453"/>
    </ligand>
</feature>
<organism>
    <name type="scientific">Bacillus cereus (strain ATCC 14579 / DSM 31 / CCUG 7414 / JCM 2152 / NBRC 15305 / NCIMB 9373 / NCTC 2599 / NRRL B-3711)</name>
    <dbReference type="NCBI Taxonomy" id="226900"/>
    <lineage>
        <taxon>Bacteria</taxon>
        <taxon>Bacillati</taxon>
        <taxon>Bacillota</taxon>
        <taxon>Bacilli</taxon>
        <taxon>Bacillales</taxon>
        <taxon>Bacillaceae</taxon>
        <taxon>Bacillus</taxon>
        <taxon>Bacillus cereus group</taxon>
    </lineage>
</organism>
<keyword id="KW-0648">Protein biosynthesis</keyword>
<keyword id="KW-1185">Reference proteome</keyword>
<keyword id="KW-0808">Transferase</keyword>
<gene>
    <name evidence="1" type="primary">fmt</name>
    <name type="ordered locus">BC_3864</name>
</gene>
<evidence type="ECO:0000255" key="1">
    <source>
        <dbReference type="HAMAP-Rule" id="MF_00182"/>
    </source>
</evidence>
<comment type="function">
    <text evidence="1">Attaches a formyl group to the free amino group of methionyl-tRNA(fMet). The formyl group appears to play a dual role in the initiator identity of N-formylmethionyl-tRNA by promoting its recognition by IF2 and preventing the misappropriation of this tRNA by the elongation apparatus.</text>
</comment>
<comment type="catalytic activity">
    <reaction evidence="1">
        <text>L-methionyl-tRNA(fMet) + (6R)-10-formyltetrahydrofolate = N-formyl-L-methionyl-tRNA(fMet) + (6S)-5,6,7,8-tetrahydrofolate + H(+)</text>
        <dbReference type="Rhea" id="RHEA:24380"/>
        <dbReference type="Rhea" id="RHEA-COMP:9952"/>
        <dbReference type="Rhea" id="RHEA-COMP:9953"/>
        <dbReference type="ChEBI" id="CHEBI:15378"/>
        <dbReference type="ChEBI" id="CHEBI:57453"/>
        <dbReference type="ChEBI" id="CHEBI:78530"/>
        <dbReference type="ChEBI" id="CHEBI:78844"/>
        <dbReference type="ChEBI" id="CHEBI:195366"/>
        <dbReference type="EC" id="2.1.2.9"/>
    </reaction>
</comment>
<comment type="similarity">
    <text evidence="1">Belongs to the Fmt family.</text>
</comment>
<dbReference type="EC" id="2.1.2.9" evidence="1"/>
<dbReference type="EMBL" id="AE016877">
    <property type="protein sequence ID" value="AAP10786.1"/>
    <property type="molecule type" value="Genomic_DNA"/>
</dbReference>
<dbReference type="RefSeq" id="NP_833585.1">
    <property type="nucleotide sequence ID" value="NC_004722.1"/>
</dbReference>
<dbReference type="RefSeq" id="WP_000598811.1">
    <property type="nucleotide sequence ID" value="NC_004722.1"/>
</dbReference>
<dbReference type="SMR" id="Q819U1"/>
<dbReference type="STRING" id="226900.BC_3864"/>
<dbReference type="KEGG" id="bce:BC3864"/>
<dbReference type="PATRIC" id="fig|226900.8.peg.3983"/>
<dbReference type="HOGENOM" id="CLU_033347_1_1_9"/>
<dbReference type="Proteomes" id="UP000001417">
    <property type="component" value="Chromosome"/>
</dbReference>
<dbReference type="GO" id="GO:0005829">
    <property type="term" value="C:cytosol"/>
    <property type="evidence" value="ECO:0000318"/>
    <property type="project" value="GO_Central"/>
</dbReference>
<dbReference type="GO" id="GO:0004479">
    <property type="term" value="F:methionyl-tRNA formyltransferase activity"/>
    <property type="evidence" value="ECO:0000318"/>
    <property type="project" value="GO_Central"/>
</dbReference>
<dbReference type="GO" id="GO:0071951">
    <property type="term" value="P:conversion of methionyl-tRNA to N-formyl-methionyl-tRNA"/>
    <property type="evidence" value="ECO:0000318"/>
    <property type="project" value="GO_Central"/>
</dbReference>
<dbReference type="CDD" id="cd08646">
    <property type="entry name" value="FMT_core_Met-tRNA-FMT_N"/>
    <property type="match status" value="1"/>
</dbReference>
<dbReference type="CDD" id="cd08704">
    <property type="entry name" value="Met_tRNA_FMT_C"/>
    <property type="match status" value="1"/>
</dbReference>
<dbReference type="FunFam" id="3.10.25.10:FF:000003">
    <property type="entry name" value="Methionyl-tRNA formyltransferase"/>
    <property type="match status" value="1"/>
</dbReference>
<dbReference type="FunFam" id="3.40.50.170:FF:000004">
    <property type="entry name" value="Methionyl-tRNA formyltransferase"/>
    <property type="match status" value="1"/>
</dbReference>
<dbReference type="Gene3D" id="3.10.25.10">
    <property type="entry name" value="Formyl transferase, C-terminal domain"/>
    <property type="match status" value="1"/>
</dbReference>
<dbReference type="Gene3D" id="3.40.50.170">
    <property type="entry name" value="Formyl transferase, N-terminal domain"/>
    <property type="match status" value="1"/>
</dbReference>
<dbReference type="HAMAP" id="MF_00182">
    <property type="entry name" value="Formyl_trans"/>
    <property type="match status" value="1"/>
</dbReference>
<dbReference type="InterPro" id="IPR005794">
    <property type="entry name" value="Fmt"/>
</dbReference>
<dbReference type="InterPro" id="IPR005793">
    <property type="entry name" value="Formyl_trans_C"/>
</dbReference>
<dbReference type="InterPro" id="IPR037022">
    <property type="entry name" value="Formyl_trans_C_sf"/>
</dbReference>
<dbReference type="InterPro" id="IPR002376">
    <property type="entry name" value="Formyl_transf_N"/>
</dbReference>
<dbReference type="InterPro" id="IPR036477">
    <property type="entry name" value="Formyl_transf_N_sf"/>
</dbReference>
<dbReference type="InterPro" id="IPR011034">
    <property type="entry name" value="Formyl_transferase-like_C_sf"/>
</dbReference>
<dbReference type="InterPro" id="IPR001555">
    <property type="entry name" value="GART_AS"/>
</dbReference>
<dbReference type="InterPro" id="IPR044135">
    <property type="entry name" value="Met-tRNA-FMT_C"/>
</dbReference>
<dbReference type="InterPro" id="IPR041711">
    <property type="entry name" value="Met-tRNA-FMT_N"/>
</dbReference>
<dbReference type="NCBIfam" id="TIGR00460">
    <property type="entry name" value="fmt"/>
    <property type="match status" value="1"/>
</dbReference>
<dbReference type="PANTHER" id="PTHR11138">
    <property type="entry name" value="METHIONYL-TRNA FORMYLTRANSFERASE"/>
    <property type="match status" value="1"/>
</dbReference>
<dbReference type="PANTHER" id="PTHR11138:SF5">
    <property type="entry name" value="METHIONYL-TRNA FORMYLTRANSFERASE, MITOCHONDRIAL"/>
    <property type="match status" value="1"/>
</dbReference>
<dbReference type="Pfam" id="PF02911">
    <property type="entry name" value="Formyl_trans_C"/>
    <property type="match status" value="1"/>
</dbReference>
<dbReference type="Pfam" id="PF00551">
    <property type="entry name" value="Formyl_trans_N"/>
    <property type="match status" value="1"/>
</dbReference>
<dbReference type="SUPFAM" id="SSF50486">
    <property type="entry name" value="FMT C-terminal domain-like"/>
    <property type="match status" value="1"/>
</dbReference>
<dbReference type="SUPFAM" id="SSF53328">
    <property type="entry name" value="Formyltransferase"/>
    <property type="match status" value="1"/>
</dbReference>
<dbReference type="PROSITE" id="PS00373">
    <property type="entry name" value="GART"/>
    <property type="match status" value="1"/>
</dbReference>
<reference key="1">
    <citation type="journal article" date="2003" name="Nature">
        <title>Genome sequence of Bacillus cereus and comparative analysis with Bacillus anthracis.</title>
        <authorList>
            <person name="Ivanova N."/>
            <person name="Sorokin A."/>
            <person name="Anderson I."/>
            <person name="Galleron N."/>
            <person name="Candelon B."/>
            <person name="Kapatral V."/>
            <person name="Bhattacharyya A."/>
            <person name="Reznik G."/>
            <person name="Mikhailova N."/>
            <person name="Lapidus A."/>
            <person name="Chu L."/>
            <person name="Mazur M."/>
            <person name="Goltsman E."/>
            <person name="Larsen N."/>
            <person name="D'Souza M."/>
            <person name="Walunas T."/>
            <person name="Grechkin Y."/>
            <person name="Pusch G."/>
            <person name="Haselkorn R."/>
            <person name="Fonstein M."/>
            <person name="Ehrlich S.D."/>
            <person name="Overbeek R."/>
            <person name="Kyrpides N.C."/>
        </authorList>
    </citation>
    <scope>NUCLEOTIDE SEQUENCE [LARGE SCALE GENOMIC DNA]</scope>
    <source>
        <strain>ATCC 14579 / DSM 31 / CCUG 7414 / JCM 2152 / NBRC 15305 / NCIMB 9373 / NCTC 2599 / NRRL B-3711</strain>
    </source>
</reference>
<name>FMT_BACCR</name>